<protein>
    <recommendedName>
        <fullName>Putative holo-[acyl-carrier-protein] synthase</fullName>
        <shortName>Holo-ACP synthase</shortName>
        <ecNumber>2.7.8.7</ecNumber>
    </recommendedName>
    <alternativeName>
        <fullName>4'-phosphopantetheinyl transferase</fullName>
    </alternativeName>
</protein>
<feature type="chain" id="PRO_0000416491" description="Putative holo-[acyl-carrier-protein] synthase">
    <location>
        <begin position="1"/>
        <end position="132"/>
    </location>
</feature>
<feature type="binding site" evidence="1">
    <location>
        <position position="6"/>
    </location>
    <ligand>
        <name>Mg(2+)</name>
        <dbReference type="ChEBI" id="CHEBI:18420"/>
    </ligand>
</feature>
<feature type="binding site" evidence="1">
    <location>
        <position position="67"/>
    </location>
    <ligand>
        <name>Mg(2+)</name>
        <dbReference type="ChEBI" id="CHEBI:18420"/>
    </ligand>
</feature>
<reference key="1">
    <citation type="journal article" date="2002" name="Nature">
        <title>The genome sequence of Schizosaccharomyces pombe.</title>
        <authorList>
            <person name="Wood V."/>
            <person name="Gwilliam R."/>
            <person name="Rajandream M.A."/>
            <person name="Lyne M.H."/>
            <person name="Lyne R."/>
            <person name="Stewart A."/>
            <person name="Sgouros J.G."/>
            <person name="Peat N."/>
            <person name="Hayles J."/>
            <person name="Baker S.G."/>
            <person name="Basham D."/>
            <person name="Bowman S."/>
            <person name="Brooks K."/>
            <person name="Brown D."/>
            <person name="Brown S."/>
            <person name="Chillingworth T."/>
            <person name="Churcher C.M."/>
            <person name="Collins M."/>
            <person name="Connor R."/>
            <person name="Cronin A."/>
            <person name="Davis P."/>
            <person name="Feltwell T."/>
            <person name="Fraser A."/>
            <person name="Gentles S."/>
            <person name="Goble A."/>
            <person name="Hamlin N."/>
            <person name="Harris D.E."/>
            <person name="Hidalgo J."/>
            <person name="Hodgson G."/>
            <person name="Holroyd S."/>
            <person name="Hornsby T."/>
            <person name="Howarth S."/>
            <person name="Huckle E.J."/>
            <person name="Hunt S."/>
            <person name="Jagels K."/>
            <person name="James K.D."/>
            <person name="Jones L."/>
            <person name="Jones M."/>
            <person name="Leather S."/>
            <person name="McDonald S."/>
            <person name="McLean J."/>
            <person name="Mooney P."/>
            <person name="Moule S."/>
            <person name="Mungall K.L."/>
            <person name="Murphy L.D."/>
            <person name="Niblett D."/>
            <person name="Odell C."/>
            <person name="Oliver K."/>
            <person name="O'Neil S."/>
            <person name="Pearson D."/>
            <person name="Quail M.A."/>
            <person name="Rabbinowitsch E."/>
            <person name="Rutherford K.M."/>
            <person name="Rutter S."/>
            <person name="Saunders D."/>
            <person name="Seeger K."/>
            <person name="Sharp S."/>
            <person name="Skelton J."/>
            <person name="Simmonds M.N."/>
            <person name="Squares R."/>
            <person name="Squares S."/>
            <person name="Stevens K."/>
            <person name="Taylor K."/>
            <person name="Taylor R.G."/>
            <person name="Tivey A."/>
            <person name="Walsh S.V."/>
            <person name="Warren T."/>
            <person name="Whitehead S."/>
            <person name="Woodward J.R."/>
            <person name="Volckaert G."/>
            <person name="Aert R."/>
            <person name="Robben J."/>
            <person name="Grymonprez B."/>
            <person name="Weltjens I."/>
            <person name="Vanstreels E."/>
            <person name="Rieger M."/>
            <person name="Schaefer M."/>
            <person name="Mueller-Auer S."/>
            <person name="Gabel C."/>
            <person name="Fuchs M."/>
            <person name="Duesterhoeft A."/>
            <person name="Fritzc C."/>
            <person name="Holzer E."/>
            <person name="Moestl D."/>
            <person name="Hilbert H."/>
            <person name="Borzym K."/>
            <person name="Langer I."/>
            <person name="Beck A."/>
            <person name="Lehrach H."/>
            <person name="Reinhardt R."/>
            <person name="Pohl T.M."/>
            <person name="Eger P."/>
            <person name="Zimmermann W."/>
            <person name="Wedler H."/>
            <person name="Wambutt R."/>
            <person name="Purnelle B."/>
            <person name="Goffeau A."/>
            <person name="Cadieu E."/>
            <person name="Dreano S."/>
            <person name="Gloux S."/>
            <person name="Lelaure V."/>
            <person name="Mottier S."/>
            <person name="Galibert F."/>
            <person name="Aves S.J."/>
            <person name="Xiang Z."/>
            <person name="Hunt C."/>
            <person name="Moore K."/>
            <person name="Hurst S.M."/>
            <person name="Lucas M."/>
            <person name="Rochet M."/>
            <person name="Gaillardin C."/>
            <person name="Tallada V.A."/>
            <person name="Garzon A."/>
            <person name="Thode G."/>
            <person name="Daga R.R."/>
            <person name="Cruzado L."/>
            <person name="Jimenez J."/>
            <person name="Sanchez M."/>
            <person name="del Rey F."/>
            <person name="Benito J."/>
            <person name="Dominguez A."/>
            <person name="Revuelta J.L."/>
            <person name="Moreno S."/>
            <person name="Armstrong J."/>
            <person name="Forsburg S.L."/>
            <person name="Cerutti L."/>
            <person name="Lowe T."/>
            <person name="McCombie W.R."/>
            <person name="Paulsen I."/>
            <person name="Potashkin J."/>
            <person name="Shpakovski G.V."/>
            <person name="Ussery D."/>
            <person name="Barrell B.G."/>
            <person name="Nurse P."/>
        </authorList>
    </citation>
    <scope>NUCLEOTIDE SEQUENCE [LARGE SCALE GENOMIC DNA]</scope>
    <source>
        <strain>972 / ATCC 24843</strain>
    </source>
</reference>
<reference key="2">
    <citation type="journal article" date="2011" name="Science">
        <title>Comparative functional genomics of the fission yeasts.</title>
        <authorList>
            <person name="Rhind N."/>
            <person name="Chen Z."/>
            <person name="Yassour M."/>
            <person name="Thompson D.A."/>
            <person name="Haas B.J."/>
            <person name="Habib N."/>
            <person name="Wapinski I."/>
            <person name="Roy S."/>
            <person name="Lin M.F."/>
            <person name="Heiman D.I."/>
            <person name="Young S.K."/>
            <person name="Furuya K."/>
            <person name="Guo Y."/>
            <person name="Pidoux A."/>
            <person name="Chen H.M."/>
            <person name="Robbertse B."/>
            <person name="Goldberg J.M."/>
            <person name="Aoki K."/>
            <person name="Bayne E.H."/>
            <person name="Berlin A.M."/>
            <person name="Desjardins C.A."/>
            <person name="Dobbs E."/>
            <person name="Dukaj L."/>
            <person name="Fan L."/>
            <person name="FitzGerald M.G."/>
            <person name="French C."/>
            <person name="Gujja S."/>
            <person name="Hansen K."/>
            <person name="Keifenheim D."/>
            <person name="Levin J.Z."/>
            <person name="Mosher R.A."/>
            <person name="Mueller C.A."/>
            <person name="Pfiffner J."/>
            <person name="Priest M."/>
            <person name="Russ C."/>
            <person name="Smialowska A."/>
            <person name="Swoboda P."/>
            <person name="Sykes S.M."/>
            <person name="Vaughn M."/>
            <person name="Vengrova S."/>
            <person name="Yoder R."/>
            <person name="Zeng Q."/>
            <person name="Allshire R."/>
            <person name="Baulcombe D."/>
            <person name="Birren B.W."/>
            <person name="Brown W."/>
            <person name="Ekwall K."/>
            <person name="Kellis M."/>
            <person name="Leatherwood J."/>
            <person name="Levin H."/>
            <person name="Margalit H."/>
            <person name="Martienssen R."/>
            <person name="Nieduszynski C.A."/>
            <person name="Spatafora J.W."/>
            <person name="Friedman N."/>
            <person name="Dalgaard J.Z."/>
            <person name="Baumann P."/>
            <person name="Niki H."/>
            <person name="Regev A."/>
            <person name="Nusbaum C."/>
        </authorList>
    </citation>
    <scope>IDENTIFICATION</scope>
</reference>
<reference key="3">
    <citation type="journal article" date="2011" name="Genetics">
        <title>Augmented annotation of the Schizosaccharomyces pombe genome reveals additional genes required for growth and viability.</title>
        <authorList>
            <person name="Bitton D.A."/>
            <person name="Wood V."/>
            <person name="Scutt P.J."/>
            <person name="Grallert A."/>
            <person name="Yates T."/>
            <person name="Smith D.L."/>
            <person name="Hagan I.M."/>
            <person name="Miller C.J."/>
        </authorList>
    </citation>
    <scope>IDENTIFICATION</scope>
    <scope>DISRUPTION PHENOTYPE</scope>
</reference>
<gene>
    <name type="primary">new8</name>
    <name type="ORF">SPAC3G9.17</name>
</gene>
<dbReference type="EC" id="2.7.8.7"/>
<dbReference type="EMBL" id="CU329670">
    <property type="protein sequence ID" value="CCD31324.1"/>
    <property type="molecule type" value="Genomic_DNA"/>
</dbReference>
<dbReference type="RefSeq" id="XP_004001779.1">
    <property type="nucleotide sequence ID" value="XM_004001730.1"/>
</dbReference>
<dbReference type="SMR" id="G2TRL9"/>
<dbReference type="FunCoup" id="G2TRL9">
    <property type="interactions" value="14"/>
</dbReference>
<dbReference type="STRING" id="284812.G2TRL9"/>
<dbReference type="PaxDb" id="4896-SPAC3G9.17.1"/>
<dbReference type="EnsemblFungi" id="SPAC3G9.17.1">
    <property type="protein sequence ID" value="SPAC3G9.17.1:pep"/>
    <property type="gene ID" value="SPAC3G9.17"/>
</dbReference>
<dbReference type="PomBase" id="SPAC3G9.17">
    <property type="gene designation" value="new8"/>
</dbReference>
<dbReference type="VEuPathDB" id="FungiDB:SPAC3G9.17"/>
<dbReference type="HOGENOM" id="CLU_089696_1_1_1"/>
<dbReference type="InParanoid" id="G2TRL9"/>
<dbReference type="OMA" id="YMPFMEY"/>
<dbReference type="PRO" id="PR:G2TRL9"/>
<dbReference type="Proteomes" id="UP000002485">
    <property type="component" value="Chromosome I"/>
</dbReference>
<dbReference type="GO" id="GO:0005759">
    <property type="term" value="C:mitochondrial matrix"/>
    <property type="evidence" value="ECO:0000305"/>
    <property type="project" value="PomBase"/>
</dbReference>
<dbReference type="GO" id="GO:0008897">
    <property type="term" value="F:holo-[acyl-carrier-protein] synthase activity"/>
    <property type="evidence" value="ECO:0000266"/>
    <property type="project" value="PomBase"/>
</dbReference>
<dbReference type="GO" id="GO:0000287">
    <property type="term" value="F:magnesium ion binding"/>
    <property type="evidence" value="ECO:0007669"/>
    <property type="project" value="InterPro"/>
</dbReference>
<dbReference type="GO" id="GO:0006633">
    <property type="term" value="P:fatty acid biosynthetic process"/>
    <property type="evidence" value="ECO:0007669"/>
    <property type="project" value="UniProtKB-KW"/>
</dbReference>
<dbReference type="FunFam" id="3.90.470.20:FF:000001">
    <property type="entry name" value="Holo-[acyl-carrier-protein] synthase"/>
    <property type="match status" value="1"/>
</dbReference>
<dbReference type="Gene3D" id="3.90.470.20">
    <property type="entry name" value="4'-phosphopantetheinyl transferase domain"/>
    <property type="match status" value="1"/>
</dbReference>
<dbReference type="HAMAP" id="MF_00101">
    <property type="entry name" value="AcpS"/>
    <property type="match status" value="1"/>
</dbReference>
<dbReference type="InterPro" id="IPR008278">
    <property type="entry name" value="4-PPantetheinyl_Trfase_dom"/>
</dbReference>
<dbReference type="InterPro" id="IPR037143">
    <property type="entry name" value="4-PPantetheinyl_Trfase_dom_sf"/>
</dbReference>
<dbReference type="InterPro" id="IPR002582">
    <property type="entry name" value="ACPS"/>
</dbReference>
<dbReference type="InterPro" id="IPR004568">
    <property type="entry name" value="Ppantetheine-prot_Trfase_dom"/>
</dbReference>
<dbReference type="NCBIfam" id="TIGR00556">
    <property type="entry name" value="pantethn_trn"/>
    <property type="match status" value="1"/>
</dbReference>
<dbReference type="Pfam" id="PF01648">
    <property type="entry name" value="ACPS"/>
    <property type="match status" value="1"/>
</dbReference>
<dbReference type="SUPFAM" id="SSF56214">
    <property type="entry name" value="4'-phosphopantetheinyl transferase"/>
    <property type="match status" value="1"/>
</dbReference>
<organism>
    <name type="scientific">Schizosaccharomyces pombe (strain 972 / ATCC 24843)</name>
    <name type="common">Fission yeast</name>
    <dbReference type="NCBI Taxonomy" id="284812"/>
    <lineage>
        <taxon>Eukaryota</taxon>
        <taxon>Fungi</taxon>
        <taxon>Dikarya</taxon>
        <taxon>Ascomycota</taxon>
        <taxon>Taphrinomycotina</taxon>
        <taxon>Schizosaccharomycetes</taxon>
        <taxon>Schizosaccharomycetales</taxon>
        <taxon>Schizosaccharomycetaceae</taxon>
        <taxon>Schizosaccharomyces</taxon>
    </lineage>
</organism>
<proteinExistence type="evidence at transcript level"/>
<accession>G2TRL9</accession>
<keyword id="KW-0275">Fatty acid biosynthesis</keyword>
<keyword id="KW-0276">Fatty acid metabolism</keyword>
<keyword id="KW-0444">Lipid biosynthesis</keyword>
<keyword id="KW-0443">Lipid metabolism</keyword>
<keyword id="KW-0460">Magnesium</keyword>
<keyword id="KW-0479">Metal-binding</keyword>
<keyword id="KW-1185">Reference proteome</keyword>
<keyword id="KW-0808">Transferase</keyword>
<name>ACPS_SCHPO</name>
<evidence type="ECO:0000250" key="1"/>
<evidence type="ECO:0000269" key="2">
    <source>
    </source>
</evidence>
<evidence type="ECO:0000305" key="3"/>
<sequence length="132" mass="15271">MGLGIDILKISRISRLIQRSPEWEKNFLKKCLCENEIKKYNLIKSNSSLPRLSEQAKWLAVRWCVKEAVFKALQPNFRVYMSMMEYVRTPTGYPSVVIHDPRFPLSPVMVSVSHEEDLVVANALYLPSMPKT</sequence>
<comment type="function">
    <text evidence="1">Transfers the 4'-phosphopantetheine moiety from coenzyme A to a Ser of acyl-carrier-protein.</text>
</comment>
<comment type="catalytic activity">
    <reaction>
        <text>apo-[ACP] + CoA = holo-[ACP] + adenosine 3',5'-bisphosphate + H(+)</text>
        <dbReference type="Rhea" id="RHEA:12068"/>
        <dbReference type="Rhea" id="RHEA-COMP:9685"/>
        <dbReference type="Rhea" id="RHEA-COMP:9690"/>
        <dbReference type="ChEBI" id="CHEBI:15378"/>
        <dbReference type="ChEBI" id="CHEBI:29999"/>
        <dbReference type="ChEBI" id="CHEBI:57287"/>
        <dbReference type="ChEBI" id="CHEBI:58343"/>
        <dbReference type="ChEBI" id="CHEBI:64479"/>
        <dbReference type="EC" id="2.7.8.7"/>
    </reaction>
</comment>
<comment type="disruption phenotype">
    <text evidence="2">Extremely slow growth at various temperatures.</text>
</comment>
<comment type="similarity">
    <text evidence="3">Belongs to the P-Pant transferase superfamily. AcpS family.</text>
</comment>